<evidence type="ECO:0000255" key="1">
    <source>
        <dbReference type="HAMAP-Rule" id="MF_00203"/>
    </source>
</evidence>
<proteinExistence type="inferred from homology"/>
<gene>
    <name evidence="1" type="primary">uvrC</name>
    <name type="ordered locus">Shewmr4_1548</name>
</gene>
<organism>
    <name type="scientific">Shewanella sp. (strain MR-4)</name>
    <dbReference type="NCBI Taxonomy" id="60480"/>
    <lineage>
        <taxon>Bacteria</taxon>
        <taxon>Pseudomonadati</taxon>
        <taxon>Pseudomonadota</taxon>
        <taxon>Gammaproteobacteria</taxon>
        <taxon>Alteromonadales</taxon>
        <taxon>Shewanellaceae</taxon>
        <taxon>Shewanella</taxon>
    </lineage>
</organism>
<dbReference type="EMBL" id="CP000446">
    <property type="protein sequence ID" value="ABI38626.1"/>
    <property type="molecule type" value="Genomic_DNA"/>
</dbReference>
<dbReference type="RefSeq" id="WP_011622329.1">
    <property type="nucleotide sequence ID" value="NC_008321.1"/>
</dbReference>
<dbReference type="SMR" id="Q0HJZ1"/>
<dbReference type="KEGG" id="she:Shewmr4_1548"/>
<dbReference type="HOGENOM" id="CLU_014841_3_0_6"/>
<dbReference type="GO" id="GO:0005737">
    <property type="term" value="C:cytoplasm"/>
    <property type="evidence" value="ECO:0007669"/>
    <property type="project" value="UniProtKB-SubCell"/>
</dbReference>
<dbReference type="GO" id="GO:0009380">
    <property type="term" value="C:excinuclease repair complex"/>
    <property type="evidence" value="ECO:0007669"/>
    <property type="project" value="InterPro"/>
</dbReference>
<dbReference type="GO" id="GO:0003677">
    <property type="term" value="F:DNA binding"/>
    <property type="evidence" value="ECO:0007669"/>
    <property type="project" value="UniProtKB-UniRule"/>
</dbReference>
<dbReference type="GO" id="GO:0009381">
    <property type="term" value="F:excinuclease ABC activity"/>
    <property type="evidence" value="ECO:0007669"/>
    <property type="project" value="UniProtKB-UniRule"/>
</dbReference>
<dbReference type="GO" id="GO:0006289">
    <property type="term" value="P:nucleotide-excision repair"/>
    <property type="evidence" value="ECO:0007669"/>
    <property type="project" value="UniProtKB-UniRule"/>
</dbReference>
<dbReference type="GO" id="GO:0009432">
    <property type="term" value="P:SOS response"/>
    <property type="evidence" value="ECO:0007669"/>
    <property type="project" value="UniProtKB-UniRule"/>
</dbReference>
<dbReference type="CDD" id="cd10434">
    <property type="entry name" value="GIY-YIG_UvrC_Cho"/>
    <property type="match status" value="1"/>
</dbReference>
<dbReference type="FunFam" id="1.10.150.20:FF:000005">
    <property type="entry name" value="UvrABC system protein C"/>
    <property type="match status" value="1"/>
</dbReference>
<dbReference type="FunFam" id="3.30.420.340:FF:000001">
    <property type="entry name" value="UvrABC system protein C"/>
    <property type="match status" value="1"/>
</dbReference>
<dbReference type="FunFam" id="3.40.1440.10:FF:000001">
    <property type="entry name" value="UvrABC system protein C"/>
    <property type="match status" value="1"/>
</dbReference>
<dbReference type="Gene3D" id="1.10.150.20">
    <property type="entry name" value="5' to 3' exonuclease, C-terminal subdomain"/>
    <property type="match status" value="1"/>
</dbReference>
<dbReference type="Gene3D" id="3.40.1440.10">
    <property type="entry name" value="GIY-YIG endonuclease"/>
    <property type="match status" value="1"/>
</dbReference>
<dbReference type="Gene3D" id="4.10.860.10">
    <property type="entry name" value="UVR domain"/>
    <property type="match status" value="1"/>
</dbReference>
<dbReference type="Gene3D" id="3.30.420.340">
    <property type="entry name" value="UvrC, RNAse H endonuclease domain"/>
    <property type="match status" value="1"/>
</dbReference>
<dbReference type="HAMAP" id="MF_00203">
    <property type="entry name" value="UvrC"/>
    <property type="match status" value="1"/>
</dbReference>
<dbReference type="InterPro" id="IPR000305">
    <property type="entry name" value="GIY-YIG_endonuc"/>
</dbReference>
<dbReference type="InterPro" id="IPR035901">
    <property type="entry name" value="GIY-YIG_endonuc_sf"/>
</dbReference>
<dbReference type="InterPro" id="IPR047296">
    <property type="entry name" value="GIY-YIG_UvrC_Cho"/>
</dbReference>
<dbReference type="InterPro" id="IPR003583">
    <property type="entry name" value="Hlx-hairpin-Hlx_DNA-bd_motif"/>
</dbReference>
<dbReference type="InterPro" id="IPR010994">
    <property type="entry name" value="RuvA_2-like"/>
</dbReference>
<dbReference type="InterPro" id="IPR001943">
    <property type="entry name" value="UVR_dom"/>
</dbReference>
<dbReference type="InterPro" id="IPR036876">
    <property type="entry name" value="UVR_dom_sf"/>
</dbReference>
<dbReference type="InterPro" id="IPR050066">
    <property type="entry name" value="UvrABC_protein_C"/>
</dbReference>
<dbReference type="InterPro" id="IPR004791">
    <property type="entry name" value="UvrC"/>
</dbReference>
<dbReference type="InterPro" id="IPR001162">
    <property type="entry name" value="UvrC_RNase_H_dom"/>
</dbReference>
<dbReference type="InterPro" id="IPR038476">
    <property type="entry name" value="UvrC_RNase_H_dom_sf"/>
</dbReference>
<dbReference type="NCBIfam" id="NF001824">
    <property type="entry name" value="PRK00558.1-5"/>
    <property type="match status" value="1"/>
</dbReference>
<dbReference type="NCBIfam" id="TIGR00194">
    <property type="entry name" value="uvrC"/>
    <property type="match status" value="1"/>
</dbReference>
<dbReference type="PANTHER" id="PTHR30562:SF1">
    <property type="entry name" value="UVRABC SYSTEM PROTEIN C"/>
    <property type="match status" value="1"/>
</dbReference>
<dbReference type="PANTHER" id="PTHR30562">
    <property type="entry name" value="UVRC/OXIDOREDUCTASE"/>
    <property type="match status" value="1"/>
</dbReference>
<dbReference type="Pfam" id="PF01541">
    <property type="entry name" value="GIY-YIG"/>
    <property type="match status" value="1"/>
</dbReference>
<dbReference type="Pfam" id="PF14520">
    <property type="entry name" value="HHH_5"/>
    <property type="match status" value="1"/>
</dbReference>
<dbReference type="Pfam" id="PF02151">
    <property type="entry name" value="UVR"/>
    <property type="match status" value="1"/>
</dbReference>
<dbReference type="Pfam" id="PF22920">
    <property type="entry name" value="UvrC_RNaseH"/>
    <property type="match status" value="1"/>
</dbReference>
<dbReference type="Pfam" id="PF08459">
    <property type="entry name" value="UvrC_RNaseH_dom"/>
    <property type="match status" value="1"/>
</dbReference>
<dbReference type="SMART" id="SM00465">
    <property type="entry name" value="GIYc"/>
    <property type="match status" value="1"/>
</dbReference>
<dbReference type="SMART" id="SM00278">
    <property type="entry name" value="HhH1"/>
    <property type="match status" value="2"/>
</dbReference>
<dbReference type="SUPFAM" id="SSF46600">
    <property type="entry name" value="C-terminal UvrC-binding domain of UvrB"/>
    <property type="match status" value="1"/>
</dbReference>
<dbReference type="SUPFAM" id="SSF82771">
    <property type="entry name" value="GIY-YIG endonuclease"/>
    <property type="match status" value="1"/>
</dbReference>
<dbReference type="SUPFAM" id="SSF47781">
    <property type="entry name" value="RuvA domain 2-like"/>
    <property type="match status" value="1"/>
</dbReference>
<dbReference type="PROSITE" id="PS50164">
    <property type="entry name" value="GIY_YIG"/>
    <property type="match status" value="1"/>
</dbReference>
<dbReference type="PROSITE" id="PS50151">
    <property type="entry name" value="UVR"/>
    <property type="match status" value="1"/>
</dbReference>
<dbReference type="PROSITE" id="PS50165">
    <property type="entry name" value="UVRC"/>
    <property type="match status" value="1"/>
</dbReference>
<feature type="chain" id="PRO_0000264947" description="UvrABC system protein C">
    <location>
        <begin position="1"/>
        <end position="609"/>
    </location>
</feature>
<feature type="domain" description="GIY-YIG" evidence="1">
    <location>
        <begin position="16"/>
        <end position="94"/>
    </location>
</feature>
<feature type="domain" description="UVR" evidence="1">
    <location>
        <begin position="203"/>
        <end position="238"/>
    </location>
</feature>
<reference key="1">
    <citation type="submission" date="2006-08" db="EMBL/GenBank/DDBJ databases">
        <title>Complete sequence of Shewanella sp. MR-4.</title>
        <authorList>
            <consortium name="US DOE Joint Genome Institute"/>
            <person name="Copeland A."/>
            <person name="Lucas S."/>
            <person name="Lapidus A."/>
            <person name="Barry K."/>
            <person name="Detter J.C."/>
            <person name="Glavina del Rio T."/>
            <person name="Hammon N."/>
            <person name="Israni S."/>
            <person name="Dalin E."/>
            <person name="Tice H."/>
            <person name="Pitluck S."/>
            <person name="Kiss H."/>
            <person name="Brettin T."/>
            <person name="Bruce D."/>
            <person name="Han C."/>
            <person name="Tapia R."/>
            <person name="Gilna P."/>
            <person name="Schmutz J."/>
            <person name="Larimer F."/>
            <person name="Land M."/>
            <person name="Hauser L."/>
            <person name="Kyrpides N."/>
            <person name="Mikhailova N."/>
            <person name="Nealson K."/>
            <person name="Konstantinidis K."/>
            <person name="Klappenbach J."/>
            <person name="Tiedje J."/>
            <person name="Richardson P."/>
        </authorList>
    </citation>
    <scope>NUCLEOTIDE SEQUENCE [LARGE SCALE GENOMIC DNA]</scope>
    <source>
        <strain>MR-4</strain>
    </source>
</reference>
<comment type="function">
    <text evidence="1">The UvrABC repair system catalyzes the recognition and processing of DNA lesions. UvrC both incises the 5' and 3' sides of the lesion. The N-terminal half is responsible for the 3' incision and the C-terminal half is responsible for the 5' incision.</text>
</comment>
<comment type="subunit">
    <text evidence="1">Interacts with UvrB in an incision complex.</text>
</comment>
<comment type="subcellular location">
    <subcellularLocation>
        <location evidence="1">Cytoplasm</location>
    </subcellularLocation>
</comment>
<comment type="similarity">
    <text evidence="1">Belongs to the UvrC family.</text>
</comment>
<protein>
    <recommendedName>
        <fullName evidence="1">UvrABC system protein C</fullName>
        <shortName evidence="1">Protein UvrC</shortName>
    </recommendedName>
    <alternativeName>
        <fullName evidence="1">Excinuclease ABC subunit C</fullName>
    </alternativeName>
</protein>
<sequence>MSTGFNAQSFLRTVSSSAGVYRMYDVKGDVIYVGKAKDLKKRLSSYFRKNLGNVKTQALVSHIHHIDVTLTHSETDALLLENDYIKQYMPKYNVLLRDDKSYPYIFLSQHEHPRLAYHRGPQREKGYYFGPYPNGGAVRESLHLMQKLFPIRQCDDLYYKSRTRPCLQYQLSRCSAPCVGKVSNAEYDEQVKLASLFLKGKDKQVISELVAKMEEAAEQQAYEQAARFRDQIMALRRVAEQQEVSGNTGDMDVIGVHYASGIACFHLLFIREGKIFGSRSYYPTVPAQTDIEEVLRSFLLQFYLNADIQRTIPKEVVISHHFEELHELEAAVSEALNKKFSIKTNVRADRASFLRLALTNATNAVMTRLSHKNTVEQRFVLLEEILELNAPIQRMECFDISHTMGESTVASCVVFNREGPHKAEYRRYNIEGITPGDDYAAMKQAISRRFDKIDASGKIPDILFIDGGLGQLRIAQQIVDEKFVNLDKAPQLIGVAKGESRKPGLETLIFGDTESSFSLEDDSPALHLIQHIRDESHRFAITGHRNRRQKTRNTSTLESIPGIGPKRRKALLQHLGGLQEVKGASVAELAKVPGISIEMAQTIHDALRG</sequence>
<keyword id="KW-0963">Cytoplasm</keyword>
<keyword id="KW-0227">DNA damage</keyword>
<keyword id="KW-0228">DNA excision</keyword>
<keyword id="KW-0234">DNA repair</keyword>
<keyword id="KW-0267">Excision nuclease</keyword>
<keyword id="KW-0742">SOS response</keyword>
<accession>Q0HJZ1</accession>
<name>UVRC_SHESM</name>